<proteinExistence type="inferred from homology"/>
<gene>
    <name evidence="1" type="primary">bchN</name>
    <name type="ordered locus">RHOS4_18900</name>
    <name type="ORF">RSP_0285</name>
</gene>
<feature type="chain" id="PRO_0000208598" description="Light-independent protochlorophyllide reductase subunit N">
    <location>
        <begin position="1"/>
        <end position="428"/>
    </location>
</feature>
<feature type="binding site" evidence="1">
    <location>
        <position position="29"/>
    </location>
    <ligand>
        <name>[4Fe-4S] cluster</name>
        <dbReference type="ChEBI" id="CHEBI:49883"/>
        <note>ligand shared with heterodimeric partner</note>
    </ligand>
</feature>
<feature type="binding site" evidence="1">
    <location>
        <position position="54"/>
    </location>
    <ligand>
        <name>[4Fe-4S] cluster</name>
        <dbReference type="ChEBI" id="CHEBI:49883"/>
        <note>ligand shared with heterodimeric partner</note>
    </ligand>
</feature>
<feature type="binding site" evidence="1">
    <location>
        <position position="115"/>
    </location>
    <ligand>
        <name>[4Fe-4S] cluster</name>
        <dbReference type="ChEBI" id="CHEBI:49883"/>
        <note>ligand shared with heterodimeric partner</note>
    </ligand>
</feature>
<feature type="sequence conflict" description="In Ref. 2; CAB38725." evidence="2" ref="2">
    <original>A</original>
    <variation>G</variation>
    <location>
        <position position="62"/>
    </location>
</feature>
<feature type="sequence conflict" description="In Ref. 2; CAB38725." evidence="2" ref="2">
    <location>
        <begin position="223"/>
        <end position="301"/>
    </location>
</feature>
<feature type="sequence conflict" description="In Ref. 2; CAB38725." evidence="2" ref="2">
    <original>S</original>
    <variation>R</variation>
    <location>
        <position position="306"/>
    </location>
</feature>
<feature type="sequence conflict" description="In Ref. 2; CAB38725." evidence="2" ref="2">
    <original>P</original>
    <variation>A</variation>
    <location>
        <position position="348"/>
    </location>
</feature>
<feature type="sequence conflict" description="In Ref. 2; CAB38725." evidence="2" ref="2">
    <original>P</original>
    <variation>A</variation>
    <location>
        <position position="415"/>
    </location>
</feature>
<accession>Q9RFD4</accession>
<accession>Q3J176</accession>
<accession>Q9Z5D8</accession>
<keyword id="KW-0004">4Fe-4S</keyword>
<keyword id="KW-0067">ATP-binding</keyword>
<keyword id="KW-0077">Bacteriochlorophyll biosynthesis</keyword>
<keyword id="KW-0149">Chlorophyll biosynthesis</keyword>
<keyword id="KW-0408">Iron</keyword>
<keyword id="KW-0411">Iron-sulfur</keyword>
<keyword id="KW-0479">Metal-binding</keyword>
<keyword id="KW-0547">Nucleotide-binding</keyword>
<keyword id="KW-0560">Oxidoreductase</keyword>
<keyword id="KW-0602">Photosynthesis</keyword>
<keyword id="KW-1185">Reference proteome</keyword>
<protein>
    <recommendedName>
        <fullName evidence="1">Light-independent protochlorophyllide reductase subunit N</fullName>
        <shortName evidence="1">DPOR subunit N</shortName>
        <shortName evidence="1">LI-POR subunit N</shortName>
        <ecNumber evidence="1">1.3.7.7</ecNumber>
    </recommendedName>
</protein>
<reference key="1">
    <citation type="journal article" date="2000" name="Nucleic Acids Res.">
        <title>DNA sequence analysis of the photosynthesis region of Rhodobacter sphaeroides 2.4.1.</title>
        <authorList>
            <person name="Choudhary M."/>
            <person name="Kaplan S."/>
        </authorList>
    </citation>
    <scope>NUCLEOTIDE SEQUENCE [GENOMIC DNA]</scope>
</reference>
<reference key="2">
    <citation type="journal article" date="1999" name="Photosyn. Res.">
        <title>The photosynthesis gene cluster of Rhodobacter sphaeroides.</title>
        <authorList>
            <person name="Naylor G.W."/>
            <person name="Addlesee H.A."/>
            <person name="Gibson L.C.D."/>
            <person name="Hunter C.N."/>
        </authorList>
    </citation>
    <scope>NUCLEOTIDE SEQUENCE [GENOMIC DNA]</scope>
</reference>
<reference key="3">
    <citation type="submission" date="2005-09" db="EMBL/GenBank/DDBJ databases">
        <title>Complete sequence of chromosome 1 of Rhodobacter sphaeroides 2.4.1.</title>
        <authorList>
            <person name="Copeland A."/>
            <person name="Lucas S."/>
            <person name="Lapidus A."/>
            <person name="Barry K."/>
            <person name="Detter J.C."/>
            <person name="Glavina T."/>
            <person name="Hammon N."/>
            <person name="Israni S."/>
            <person name="Pitluck S."/>
            <person name="Richardson P."/>
            <person name="Mackenzie C."/>
            <person name="Choudhary M."/>
            <person name="Larimer F."/>
            <person name="Hauser L.J."/>
            <person name="Land M."/>
            <person name="Donohue T.J."/>
            <person name="Kaplan S."/>
        </authorList>
    </citation>
    <scope>NUCLEOTIDE SEQUENCE [LARGE SCALE GENOMIC DNA]</scope>
    <source>
        <strain>ATCC 17023 / DSM 158 / JCM 6121 / CCUG 31486 / LMG 2827 / NBRC 12203 / NCIMB 8253 / ATH 2.4.1.</strain>
    </source>
</reference>
<sequence>MSLDLPPPPARGCRSTEVLKERGQREVFCGLTGIIWLHRKMQDAFFLVVGSRTCAHLLQSAAGVMIFAEPRFGTAVLEEKDLAGLADANAELDREVDRLLARRPDIRQLFLVGSCPSEVIKLDLHRAAERLSAHHGPAVRVYNFSGSGIETTFTQGEDACLASIVPTLPATEARELLLVGALPDVVEDQAVSLLTQLGIGPVRCLPAHHAAEAPGVGPNTVFALVQPFLGDTHGALTRRGARHIAAPFPFGEEGTTLWLKAIADEFGVSADTFEAVTAAPRARARKAVAAASEGLRGKSVFFLPDSQLEPSLARFLTRECGMSAVEVGTPFLHRGILGPDLDLIAEGPVLSEGQDVERQLDRVRAARPDLTVCGLGLANPLEAEGFTTKWAIELVFTPVHFYEQAGDLAGLFSRPVRRRAILRREAAE</sequence>
<name>BCHN_CERS4</name>
<organism>
    <name type="scientific">Cereibacter sphaeroides (strain ATCC 17023 / DSM 158 / JCM 6121 / CCUG 31486 / LMG 2827 / NBRC 12203 / NCIMB 8253 / ATH 2.4.1.)</name>
    <name type="common">Rhodobacter sphaeroides</name>
    <dbReference type="NCBI Taxonomy" id="272943"/>
    <lineage>
        <taxon>Bacteria</taxon>
        <taxon>Pseudomonadati</taxon>
        <taxon>Pseudomonadota</taxon>
        <taxon>Alphaproteobacteria</taxon>
        <taxon>Rhodobacterales</taxon>
        <taxon>Paracoccaceae</taxon>
        <taxon>Cereibacter</taxon>
    </lineage>
</organism>
<comment type="function">
    <text evidence="1">Component of the dark-operative protochlorophyllide reductase (DPOR) that uses Mg-ATP and reduced ferredoxin to reduce ring D of protochlorophyllide (Pchlide) to form chlorophyllide a (Chlide). This reaction is light-independent. The NB-protein (BchN-BchB) is the catalytic component of the complex.</text>
</comment>
<comment type="catalytic activity">
    <reaction evidence="1">
        <text>chlorophyllide a + oxidized 2[4Fe-4S]-[ferredoxin] + 2 ADP + 2 phosphate = protochlorophyllide a + reduced 2[4Fe-4S]-[ferredoxin] + 2 ATP + 2 H2O</text>
        <dbReference type="Rhea" id="RHEA:28202"/>
        <dbReference type="Rhea" id="RHEA-COMP:10002"/>
        <dbReference type="Rhea" id="RHEA-COMP:10004"/>
        <dbReference type="ChEBI" id="CHEBI:15377"/>
        <dbReference type="ChEBI" id="CHEBI:30616"/>
        <dbReference type="ChEBI" id="CHEBI:33722"/>
        <dbReference type="ChEBI" id="CHEBI:33723"/>
        <dbReference type="ChEBI" id="CHEBI:43474"/>
        <dbReference type="ChEBI" id="CHEBI:83348"/>
        <dbReference type="ChEBI" id="CHEBI:83350"/>
        <dbReference type="ChEBI" id="CHEBI:456216"/>
        <dbReference type="EC" id="1.3.7.7"/>
    </reaction>
</comment>
<comment type="cofactor">
    <cofactor evidence="1">
        <name>[4Fe-4S] cluster</name>
        <dbReference type="ChEBI" id="CHEBI:49883"/>
    </cofactor>
    <text evidence="1">Binds 1 [4Fe-4S] cluster per heterodimer. The cluster is bound at the heterodimer interface by residues from both subunits.</text>
</comment>
<comment type="pathway">
    <text evidence="1">Porphyrin-containing compound metabolism; bacteriochlorophyll biosynthesis (light-independent).</text>
</comment>
<comment type="subunit">
    <text evidence="1">Protochlorophyllide reductase is composed of three subunits; BchL, BchN and BchB. Forms a heterotetramer of two BchB and two BchN subunits.</text>
</comment>
<comment type="similarity">
    <text evidence="1">Belongs to the BchN/ChlN family.</text>
</comment>
<dbReference type="EC" id="1.3.7.7" evidence="1"/>
<dbReference type="EMBL" id="AF195122">
    <property type="protein sequence ID" value="AAF24275.1"/>
    <property type="molecule type" value="Genomic_DNA"/>
</dbReference>
<dbReference type="EMBL" id="AJ010302">
    <property type="protein sequence ID" value="CAB38725.1"/>
    <property type="molecule type" value="Genomic_DNA"/>
</dbReference>
<dbReference type="EMBL" id="CP000143">
    <property type="protein sequence ID" value="ABA79458.1"/>
    <property type="molecule type" value="Genomic_DNA"/>
</dbReference>
<dbReference type="PIR" id="T50731">
    <property type="entry name" value="T50731"/>
</dbReference>
<dbReference type="RefSeq" id="WP_002720449.1">
    <property type="nucleotide sequence ID" value="NZ_CP030271.1"/>
</dbReference>
<dbReference type="RefSeq" id="YP_353359.1">
    <property type="nucleotide sequence ID" value="NC_007493.2"/>
</dbReference>
<dbReference type="SMR" id="Q9RFD4"/>
<dbReference type="STRING" id="272943.RSP_0285"/>
<dbReference type="EnsemblBacteria" id="ABA79458">
    <property type="protein sequence ID" value="ABA79458"/>
    <property type="gene ID" value="RSP_0285"/>
</dbReference>
<dbReference type="GeneID" id="3719197"/>
<dbReference type="KEGG" id="rsp:RSP_0285"/>
<dbReference type="PATRIC" id="fig|272943.9.peg.2229"/>
<dbReference type="eggNOG" id="COG2710">
    <property type="taxonomic scope" value="Bacteria"/>
</dbReference>
<dbReference type="OrthoDB" id="5714774at2"/>
<dbReference type="PhylomeDB" id="Q9RFD4"/>
<dbReference type="UniPathway" id="UPA00671"/>
<dbReference type="Proteomes" id="UP000002703">
    <property type="component" value="Chromosome 1"/>
</dbReference>
<dbReference type="GO" id="GO:0051539">
    <property type="term" value="F:4 iron, 4 sulfur cluster binding"/>
    <property type="evidence" value="ECO:0007669"/>
    <property type="project" value="UniProtKB-UniRule"/>
</dbReference>
<dbReference type="GO" id="GO:0005524">
    <property type="term" value="F:ATP binding"/>
    <property type="evidence" value="ECO:0007669"/>
    <property type="project" value="UniProtKB-UniRule"/>
</dbReference>
<dbReference type="GO" id="GO:0046872">
    <property type="term" value="F:metal ion binding"/>
    <property type="evidence" value="ECO:0007669"/>
    <property type="project" value="UniProtKB-KW"/>
</dbReference>
<dbReference type="GO" id="GO:0016730">
    <property type="term" value="F:oxidoreductase activity, acting on iron-sulfur proteins as donors"/>
    <property type="evidence" value="ECO:0007669"/>
    <property type="project" value="InterPro"/>
</dbReference>
<dbReference type="GO" id="GO:0016636">
    <property type="term" value="F:oxidoreductase activity, acting on the CH-CH group of donors, iron-sulfur protein as acceptor"/>
    <property type="evidence" value="ECO:0007669"/>
    <property type="project" value="UniProtKB-UniRule"/>
</dbReference>
<dbReference type="GO" id="GO:0036070">
    <property type="term" value="P:light-independent bacteriochlorophyll biosynthetic process"/>
    <property type="evidence" value="ECO:0007669"/>
    <property type="project" value="UniProtKB-UniRule"/>
</dbReference>
<dbReference type="GO" id="GO:0019685">
    <property type="term" value="P:photosynthesis, dark reaction"/>
    <property type="evidence" value="ECO:0007669"/>
    <property type="project" value="InterPro"/>
</dbReference>
<dbReference type="Gene3D" id="3.40.50.1980">
    <property type="entry name" value="Nitrogenase molybdenum iron protein domain"/>
    <property type="match status" value="3"/>
</dbReference>
<dbReference type="HAMAP" id="MF_00352">
    <property type="entry name" value="ChlN_BchN"/>
    <property type="match status" value="1"/>
</dbReference>
<dbReference type="InterPro" id="IPR050293">
    <property type="entry name" value="LIPOR_BchN/ChlN"/>
</dbReference>
<dbReference type="InterPro" id="IPR000510">
    <property type="entry name" value="Nase/OxRdtase_comp1"/>
</dbReference>
<dbReference type="InterPro" id="IPR005970">
    <property type="entry name" value="Protochl_reductN"/>
</dbReference>
<dbReference type="NCBIfam" id="TIGR01279">
    <property type="entry name" value="DPOR_bchN"/>
    <property type="match status" value="1"/>
</dbReference>
<dbReference type="NCBIfam" id="NF002768">
    <property type="entry name" value="PRK02842.1"/>
    <property type="match status" value="1"/>
</dbReference>
<dbReference type="PANTHER" id="PTHR39429">
    <property type="entry name" value="LIGHT-INDEPENDENT PROTOCHLOROPHYLLIDE REDUCTASE SUBUNIT N"/>
    <property type="match status" value="1"/>
</dbReference>
<dbReference type="PANTHER" id="PTHR39429:SF3">
    <property type="entry name" value="LIGHT-INDEPENDENT PROTOCHLOROPHYLLIDE REDUCTASE SUBUNIT N"/>
    <property type="match status" value="1"/>
</dbReference>
<dbReference type="Pfam" id="PF00148">
    <property type="entry name" value="Oxidored_nitro"/>
    <property type="match status" value="1"/>
</dbReference>
<dbReference type="PIRSF" id="PIRSF000162">
    <property type="entry name" value="P_chlorophyll_rd"/>
    <property type="match status" value="1"/>
</dbReference>
<dbReference type="SUPFAM" id="SSF53807">
    <property type="entry name" value="Helical backbone' metal receptor"/>
    <property type="match status" value="1"/>
</dbReference>
<evidence type="ECO:0000255" key="1">
    <source>
        <dbReference type="HAMAP-Rule" id="MF_00352"/>
    </source>
</evidence>
<evidence type="ECO:0000305" key="2"/>